<sequence length="360" mass="40380">MDFSTNGSEESELYHAQIHLYKHIYNFVSSMALKSAVELGIADAIHNHGKPMTLPELASSLKLHPSKVNILYRFLRLLTHNGFFAKTTVKSNGEEEETAYVLTPSSKLLVSGKSTCLSSVVKGALHPISLDLWGVSKKWFHEDKEQTLFECATGENYWDFLNKDSDYLSIFQDAMAADSRLFKLAIQENKHVFEGLESLVDVAGGTGGVAKLIHEAFPHIKCTVFDQPQVVGNLTGNENLNFVSGDMFKSVPSADAVLLKWVLHDWNDELSLKILKKSKEAISHKGKDGKVIIIDISIDDNSDDHGLTELQLEYDVVMLTMFLGKERTKKEWEKLIYDAGFSRYKITPICGFKSLIEVYP</sequence>
<gene>
    <name type="primary">HMM2</name>
</gene>
<dbReference type="EC" id="2.1.1.270" evidence="2 4"/>
<dbReference type="SMR" id="P0DH60"/>
<dbReference type="SABIO-RK" id="P0DH60"/>
<dbReference type="GO" id="GO:0102671">
    <property type="term" value="F:6a-hydroxymaackiain-3-O-methyltransferase activity"/>
    <property type="evidence" value="ECO:0007669"/>
    <property type="project" value="UniProtKB-EC"/>
</dbReference>
<dbReference type="GO" id="GO:0008171">
    <property type="term" value="F:O-methyltransferase activity"/>
    <property type="evidence" value="ECO:0007669"/>
    <property type="project" value="InterPro"/>
</dbReference>
<dbReference type="GO" id="GO:0046983">
    <property type="term" value="F:protein dimerization activity"/>
    <property type="evidence" value="ECO:0007669"/>
    <property type="project" value="InterPro"/>
</dbReference>
<dbReference type="GO" id="GO:0008757">
    <property type="term" value="F:S-adenosylmethionine-dependent methyltransferase activity"/>
    <property type="evidence" value="ECO:0007669"/>
    <property type="project" value="UniProtKB-ARBA"/>
</dbReference>
<dbReference type="GO" id="GO:0032259">
    <property type="term" value="P:methylation"/>
    <property type="evidence" value="ECO:0007669"/>
    <property type="project" value="UniProtKB-KW"/>
</dbReference>
<dbReference type="FunFam" id="1.10.10.10:FF:000213">
    <property type="entry name" value="Coniferyl alcohol 9-O-methyltransferase"/>
    <property type="match status" value="1"/>
</dbReference>
<dbReference type="FunFam" id="3.40.50.150:FF:000206">
    <property type="entry name" value="O-methyltransferase ZRP4"/>
    <property type="match status" value="1"/>
</dbReference>
<dbReference type="Gene3D" id="3.40.50.150">
    <property type="entry name" value="Vaccinia Virus protein VP39"/>
    <property type="match status" value="1"/>
</dbReference>
<dbReference type="Gene3D" id="1.10.10.10">
    <property type="entry name" value="Winged helix-like DNA-binding domain superfamily/Winged helix DNA-binding domain"/>
    <property type="match status" value="1"/>
</dbReference>
<dbReference type="InterPro" id="IPR016461">
    <property type="entry name" value="COMT-like"/>
</dbReference>
<dbReference type="InterPro" id="IPR001077">
    <property type="entry name" value="O_MeTrfase_dom"/>
</dbReference>
<dbReference type="InterPro" id="IPR012967">
    <property type="entry name" value="Plant_O-MeTrfase_dimerisation"/>
</dbReference>
<dbReference type="InterPro" id="IPR029063">
    <property type="entry name" value="SAM-dependent_MTases_sf"/>
</dbReference>
<dbReference type="InterPro" id="IPR036388">
    <property type="entry name" value="WH-like_DNA-bd_sf"/>
</dbReference>
<dbReference type="InterPro" id="IPR036390">
    <property type="entry name" value="WH_DNA-bd_sf"/>
</dbReference>
<dbReference type="PANTHER" id="PTHR11746">
    <property type="entry name" value="O-METHYLTRANSFERASE"/>
    <property type="match status" value="1"/>
</dbReference>
<dbReference type="Pfam" id="PF08100">
    <property type="entry name" value="Dimerisation"/>
    <property type="match status" value="1"/>
</dbReference>
<dbReference type="Pfam" id="PF00891">
    <property type="entry name" value="Methyltransf_2"/>
    <property type="match status" value="1"/>
</dbReference>
<dbReference type="PIRSF" id="PIRSF005739">
    <property type="entry name" value="O-mtase"/>
    <property type="match status" value="1"/>
</dbReference>
<dbReference type="SUPFAM" id="SSF53335">
    <property type="entry name" value="S-adenosyl-L-methionine-dependent methyltransferases"/>
    <property type="match status" value="1"/>
</dbReference>
<dbReference type="SUPFAM" id="SSF46785">
    <property type="entry name" value="Winged helix' DNA-binding domain"/>
    <property type="match status" value="1"/>
</dbReference>
<dbReference type="PROSITE" id="PS51683">
    <property type="entry name" value="SAM_OMT_II"/>
    <property type="match status" value="1"/>
</dbReference>
<name>M3OM2_PEA</name>
<feature type="chain" id="PRO_0000411979" description="(+)-6a-hydroxymaackiain 3-O-methyltransferase 2">
    <location>
        <begin position="1"/>
        <end position="360"/>
    </location>
</feature>
<feature type="active site" description="Proton acceptor" evidence="1">
    <location>
        <position position="264"/>
    </location>
</feature>
<feature type="binding site" evidence="1">
    <location>
        <begin position="202"/>
        <end position="205"/>
    </location>
    <ligand>
        <name>S-adenosyl-L-methionine</name>
        <dbReference type="ChEBI" id="CHEBI:59789"/>
    </ligand>
</feature>
<feature type="binding site" evidence="1">
    <location>
        <begin position="226"/>
        <end position="227"/>
    </location>
    <ligand>
        <name>S-adenosyl-L-methionine</name>
        <dbReference type="ChEBI" id="CHEBI:59789"/>
    </ligand>
</feature>
<feature type="binding site" evidence="1">
    <location>
        <position position="226"/>
    </location>
    <ligand>
        <name>S-adenosyl-L-methionine</name>
        <dbReference type="ChEBI" id="CHEBI:59789"/>
    </ligand>
</feature>
<feature type="binding site" evidence="1">
    <location>
        <begin position="246"/>
        <end position="247"/>
    </location>
    <ligand>
        <name>S-adenosyl-L-methionine</name>
        <dbReference type="ChEBI" id="CHEBI:59789"/>
    </ligand>
</feature>
<feature type="binding site" evidence="1">
    <location>
        <position position="260"/>
    </location>
    <ligand>
        <name>S-adenosyl-L-methionine</name>
        <dbReference type="ChEBI" id="CHEBI:59789"/>
    </ligand>
</feature>
<protein>
    <recommendedName>
        <fullName>(+)-6a-hydroxymaackiain 3-O-methyltransferase 2</fullName>
        <ecNumber evidence="2 4">2.1.1.270</ecNumber>
    </recommendedName>
</protein>
<keyword id="KW-0489">Methyltransferase</keyword>
<keyword id="KW-0949">S-adenosyl-L-methionine</keyword>
<keyword id="KW-0808">Transferase</keyword>
<organism>
    <name type="scientific">Pisum sativum</name>
    <name type="common">Garden pea</name>
    <name type="synonym">Lathyrus oleraceus</name>
    <dbReference type="NCBI Taxonomy" id="3888"/>
    <lineage>
        <taxon>Eukaryota</taxon>
        <taxon>Viridiplantae</taxon>
        <taxon>Streptophyta</taxon>
        <taxon>Embryophyta</taxon>
        <taxon>Tracheophyta</taxon>
        <taxon>Spermatophyta</taxon>
        <taxon>Magnoliopsida</taxon>
        <taxon>eudicotyledons</taxon>
        <taxon>Gunneridae</taxon>
        <taxon>Pentapetalae</taxon>
        <taxon>rosids</taxon>
        <taxon>fabids</taxon>
        <taxon>Fabales</taxon>
        <taxon>Fabaceae</taxon>
        <taxon>Papilionoideae</taxon>
        <taxon>50 kb inversion clade</taxon>
        <taxon>NPAAA clade</taxon>
        <taxon>Hologalegina</taxon>
        <taxon>IRL clade</taxon>
        <taxon>Fabeae</taxon>
        <taxon>Pisum</taxon>
    </lineage>
</organism>
<accession>P0DH60</accession>
<comment type="function">
    <text evidence="2 3 4">3-O-methyltransferase involved in the phytoalexin pisatin biosynthesis. Can use (+)-6a-hydroxymaackiain, (+)-maackiain and with a lower activity (+)-medicarpin and 2,7,4'-trihydroxyisoflavanone as substrates, but not (-)-6a-hydroxymaackiain, daidzein, formononetin or isoliquiritigenin.</text>
</comment>
<comment type="catalytic activity">
    <reaction evidence="2 4">
        <text>(+)-6a-hydroxymaackiain + S-adenosyl-L-methionine = (+)-pisatin + S-adenosyl-L-homocysteine + H(+)</text>
        <dbReference type="Rhea" id="RHEA:35471"/>
        <dbReference type="ChEBI" id="CHEBI:15378"/>
        <dbReference type="ChEBI" id="CHEBI:43129"/>
        <dbReference type="ChEBI" id="CHEBI:57856"/>
        <dbReference type="ChEBI" id="CHEBI:59789"/>
        <dbReference type="ChEBI" id="CHEBI:67347"/>
        <dbReference type="EC" id="2.1.1.270"/>
    </reaction>
</comment>
<comment type="biophysicochemical properties">
    <kinetics>
        <KM evidence="2">23 uM for 2,7,4'-trihydroxyisoflavanone</KM>
        <KM evidence="2">0.5 uM for (+)-6a-hydroxymaackiain</KM>
        <Vmax evidence="2">340.0 pmol/sec/mg enzyme with 2,7,4'-trihydroxyisoflavanone as substrate</Vmax>
        <Vmax evidence="2">520.0 pmol/sec/mg enzyme with (+)-6a-hydroxymaackiain as substrate</Vmax>
    </kinetics>
</comment>
<comment type="induction">
    <text evidence="4">Up-regulated by copper.</text>
</comment>
<comment type="similarity">
    <text evidence="1">Belongs to the class I-like SAM-binding methyltransferase superfamily. Cation-independent O-methyltransferase family. COMT subfamily.</text>
</comment>
<proteinExistence type="evidence at protein level"/>
<reference key="1">
    <citation type="journal article" date="1997" name="Plant Mol. Biol.">
        <title>Isolation of the cDNAs encoding (+)6a-hydroxymaackiain 3-O-methyltransferase, the terminal step for the synthesis of the phytoalexin pisatin in Pisum sativum.</title>
        <authorList>
            <person name="Wu Q."/>
            <person name="Preisig C.L."/>
            <person name="VanEtten H.D."/>
        </authorList>
    </citation>
    <scope>NUCLEOTIDE SEQUENCE [MRNA]</scope>
    <scope>FUNCTION</scope>
    <scope>CATALYTIC ACTIVITY</scope>
    <scope>INDUCTION BY COPPER</scope>
    <source>
        <strain>cv. Alaska</strain>
    </source>
</reference>
<reference key="2">
    <citation type="journal article" date="2006" name="Phytochemistry">
        <title>Catalytic specificity of pea O-methyltransferases suggests gene duplication for (+)-pisatin biosynthesis.</title>
        <authorList>
            <person name="Akashi T."/>
            <person name="VanEtten H.D."/>
            <person name="Sawada Y."/>
            <person name="Wasmann C.C."/>
            <person name="Uchiyama H."/>
            <person name="Ayabe S."/>
        </authorList>
    </citation>
    <scope>FUNCTION</scope>
    <scope>CATALYTIC ACTIVITY</scope>
    <scope>BIOPHYSICOCHEMICAL PROPERTIES</scope>
    <scope>3D-STRUCTURE MODELING</scope>
</reference>
<reference key="3">
    <citation type="journal article" date="2008" name="Phytochemistry">
        <title>Inactivation of pea genes by RNAi supports the involvement of two similar O-methyltransferases in the biosynthesis of (+)-pisatin and of chiral intermediates with a configuration opposite that found in (+)-pisatin.</title>
        <authorList>
            <person name="Kaimoyo E."/>
            <person name="VanEtten H.D."/>
        </authorList>
    </citation>
    <scope>FUNCTION</scope>
</reference>
<evidence type="ECO:0000255" key="1">
    <source>
        <dbReference type="PROSITE-ProRule" id="PRU01020"/>
    </source>
</evidence>
<evidence type="ECO:0000269" key="2">
    <source>
    </source>
</evidence>
<evidence type="ECO:0000269" key="3">
    <source>
    </source>
</evidence>
<evidence type="ECO:0000269" key="4">
    <source>
    </source>
</evidence>